<proteinExistence type="inferred from homology"/>
<feature type="initiator methionine" description="Removed" evidence="1">
    <location>
        <position position="1"/>
    </location>
</feature>
<feature type="chain" id="PRO_0000198364" description="Ribulokinase">
    <location>
        <begin position="2"/>
        <end position="569"/>
    </location>
</feature>
<protein>
    <recommendedName>
        <fullName evidence="2">Ribulokinase</fullName>
        <ecNumber evidence="2">2.7.1.16</ecNumber>
    </recommendedName>
</protein>
<accession>P06188</accession>
<dbReference type="EC" id="2.7.1.16" evidence="2"/>
<dbReference type="EMBL" id="M11047">
    <property type="protein sequence ID" value="AAA27023.1"/>
    <property type="molecule type" value="Genomic_DNA"/>
</dbReference>
<dbReference type="EMBL" id="AE006468">
    <property type="protein sequence ID" value="AAL19067.1"/>
    <property type="molecule type" value="Genomic_DNA"/>
</dbReference>
<dbReference type="PIR" id="A24984">
    <property type="entry name" value="A24984"/>
</dbReference>
<dbReference type="RefSeq" id="NP_459108.1">
    <property type="nucleotide sequence ID" value="NC_003197.2"/>
</dbReference>
<dbReference type="RefSeq" id="WP_000951812.1">
    <property type="nucleotide sequence ID" value="NC_003197.2"/>
</dbReference>
<dbReference type="SMR" id="P06188"/>
<dbReference type="STRING" id="99287.STM0103"/>
<dbReference type="PaxDb" id="99287-STM0103"/>
<dbReference type="GeneID" id="1251621"/>
<dbReference type="KEGG" id="stm:STM0103"/>
<dbReference type="PATRIC" id="fig|99287.12.peg.106"/>
<dbReference type="HOGENOM" id="CLU_009281_9_1_6"/>
<dbReference type="OMA" id="HKAMWHE"/>
<dbReference type="PhylomeDB" id="P06188"/>
<dbReference type="BioCyc" id="SENT99287:STM0103-MONOMER"/>
<dbReference type="UniPathway" id="UPA00145">
    <property type="reaction ID" value="UER00566"/>
</dbReference>
<dbReference type="Proteomes" id="UP000001014">
    <property type="component" value="Chromosome"/>
</dbReference>
<dbReference type="GO" id="GO:0005737">
    <property type="term" value="C:cytoplasm"/>
    <property type="evidence" value="ECO:0000318"/>
    <property type="project" value="GO_Central"/>
</dbReference>
<dbReference type="GO" id="GO:0005524">
    <property type="term" value="F:ATP binding"/>
    <property type="evidence" value="ECO:0007669"/>
    <property type="project" value="UniProtKB-KW"/>
</dbReference>
<dbReference type="GO" id="GO:0019150">
    <property type="term" value="F:D-ribulokinase activity"/>
    <property type="evidence" value="ECO:0000318"/>
    <property type="project" value="GO_Central"/>
</dbReference>
<dbReference type="GO" id="GO:0008741">
    <property type="term" value="F:ribulokinase activity"/>
    <property type="evidence" value="ECO:0007669"/>
    <property type="project" value="UniProtKB-UniRule"/>
</dbReference>
<dbReference type="GO" id="GO:0019569">
    <property type="term" value="P:L-arabinose catabolic process to xylulose 5-phosphate"/>
    <property type="evidence" value="ECO:0007669"/>
    <property type="project" value="UniProtKB-UniRule"/>
</dbReference>
<dbReference type="GO" id="GO:0019321">
    <property type="term" value="P:pentose metabolic process"/>
    <property type="evidence" value="ECO:0000318"/>
    <property type="project" value="GO_Central"/>
</dbReference>
<dbReference type="CDD" id="cd07781">
    <property type="entry name" value="ASKHA_NBD_FGGY_L-RBK"/>
    <property type="match status" value="1"/>
</dbReference>
<dbReference type="Gene3D" id="1.20.58.2240">
    <property type="match status" value="1"/>
</dbReference>
<dbReference type="Gene3D" id="3.30.420.40">
    <property type="match status" value="1"/>
</dbReference>
<dbReference type="HAMAP" id="MF_00520">
    <property type="entry name" value="Ribulokinase"/>
    <property type="match status" value="1"/>
</dbReference>
<dbReference type="InterPro" id="IPR043129">
    <property type="entry name" value="ATPase_NBD"/>
</dbReference>
<dbReference type="InterPro" id="IPR018485">
    <property type="entry name" value="FGGY_C"/>
</dbReference>
<dbReference type="InterPro" id="IPR005929">
    <property type="entry name" value="Ribulokinase"/>
</dbReference>
<dbReference type="NCBIfam" id="TIGR01234">
    <property type="entry name" value="L-ribulokinase"/>
    <property type="match status" value="1"/>
</dbReference>
<dbReference type="NCBIfam" id="NF003154">
    <property type="entry name" value="PRK04123.1"/>
    <property type="match status" value="1"/>
</dbReference>
<dbReference type="PANTHER" id="PTHR43435:SF4">
    <property type="entry name" value="FGGY CARBOHYDRATE KINASE DOMAIN-CONTAINING PROTEIN"/>
    <property type="match status" value="1"/>
</dbReference>
<dbReference type="PANTHER" id="PTHR43435">
    <property type="entry name" value="RIBULOKINASE"/>
    <property type="match status" value="1"/>
</dbReference>
<dbReference type="Pfam" id="PF02782">
    <property type="entry name" value="FGGY_C"/>
    <property type="match status" value="1"/>
</dbReference>
<dbReference type="SUPFAM" id="SSF53067">
    <property type="entry name" value="Actin-like ATPase domain"/>
    <property type="match status" value="2"/>
</dbReference>
<name>ARAB_SALTY</name>
<reference key="1">
    <citation type="journal article" date="1985" name="Gene">
        <title>The araBAD operon of Salmonella typhimurium LT2. I. Nucleotide sequence of araB and primary structure of its product, ribulokinase.</title>
        <authorList>
            <person name="Lin H.-C."/>
            <person name="Lei S.-P."/>
            <person name="Wilcox G."/>
        </authorList>
    </citation>
    <scope>NUCLEOTIDE SEQUENCE [GENOMIC DNA]</scope>
</reference>
<reference key="2">
    <citation type="journal article" date="2001" name="Nature">
        <title>Complete genome sequence of Salmonella enterica serovar Typhimurium LT2.</title>
        <authorList>
            <person name="McClelland M."/>
            <person name="Sanderson K.E."/>
            <person name="Spieth J."/>
            <person name="Clifton S.W."/>
            <person name="Latreille P."/>
            <person name="Courtney L."/>
            <person name="Porwollik S."/>
            <person name="Ali J."/>
            <person name="Dante M."/>
            <person name="Du F."/>
            <person name="Hou S."/>
            <person name="Layman D."/>
            <person name="Leonard S."/>
            <person name="Nguyen C."/>
            <person name="Scott K."/>
            <person name="Holmes A."/>
            <person name="Grewal N."/>
            <person name="Mulvaney E."/>
            <person name="Ryan E."/>
            <person name="Sun H."/>
            <person name="Florea L."/>
            <person name="Miller W."/>
            <person name="Stoneking T."/>
            <person name="Nhan M."/>
            <person name="Waterston R."/>
            <person name="Wilson R.K."/>
        </authorList>
    </citation>
    <scope>NUCLEOTIDE SEQUENCE [LARGE SCALE GENOMIC DNA]</scope>
    <source>
        <strain>LT2 / SGSC1412 / ATCC 700720</strain>
    </source>
</reference>
<sequence>MAIAIGLDFGSDSVRALAVDCATGDEIATSVEWYPRWQEGRYCDGPNNQFRHHPRDYMESMEAALKAVLAQLSAAQRANVVGIGVDSTGSTPAPIDADGNVLALRPEFAENPNAMFVLWKDHTAVEEADEITRLCHKPGKVDYSRYIGGIYSSEWFWAKILHVTRQDSAVAQAAVSWIELCDWVPALLSGTTRPQDIRRGRCSAGHKTLWHESWGGLPPASFFDELDPCINRHLRYPLFSETFTADLPVGTLCAEWAQRLDLPESVVISGGAFDCHMGAVGAGAQPNTLVKVIGTSTCDILIADKQSVGDRAVKGICGQVDGSVVPNFIGLEAGQSAFGDIYAWFSRVLSWPLEQLAAQHPELKPQINASQKQLLPALTDAWAKNPSLDHLPVVLDWFNGRRTPNANQRLKGVITDLNLATDAPALFGGLVASTAFGARAIQECFTDQGIAVNNVMALGGIARKNQVIMQVCCDVLNRPLQIVASDQCCALGAAIFAAVAAKVHADIPAAQQSMASAVERTLRPHPEQAQRFEQLYRRYQQWALSAEQHYLPTAAPAPTTPANQAILTH</sequence>
<organism>
    <name type="scientific">Salmonella typhimurium (strain LT2 / SGSC1412 / ATCC 700720)</name>
    <dbReference type="NCBI Taxonomy" id="99287"/>
    <lineage>
        <taxon>Bacteria</taxon>
        <taxon>Pseudomonadati</taxon>
        <taxon>Pseudomonadota</taxon>
        <taxon>Gammaproteobacteria</taxon>
        <taxon>Enterobacterales</taxon>
        <taxon>Enterobacteriaceae</taxon>
        <taxon>Salmonella</taxon>
    </lineage>
</organism>
<gene>
    <name evidence="2" type="primary">araB</name>
    <name type="ordered locus">STM0103</name>
</gene>
<keyword id="KW-0054">Arabinose catabolism</keyword>
<keyword id="KW-0067">ATP-binding</keyword>
<keyword id="KW-0119">Carbohydrate metabolism</keyword>
<keyword id="KW-0418">Kinase</keyword>
<keyword id="KW-0547">Nucleotide-binding</keyword>
<keyword id="KW-1185">Reference proteome</keyword>
<keyword id="KW-0808">Transferase</keyword>
<comment type="catalytic activity">
    <reaction evidence="2">
        <text>D-ribulose + ATP = D-ribulose 5-phosphate + ADP + H(+)</text>
        <dbReference type="Rhea" id="RHEA:17601"/>
        <dbReference type="ChEBI" id="CHEBI:15378"/>
        <dbReference type="ChEBI" id="CHEBI:17173"/>
        <dbReference type="ChEBI" id="CHEBI:30616"/>
        <dbReference type="ChEBI" id="CHEBI:58121"/>
        <dbReference type="ChEBI" id="CHEBI:456216"/>
        <dbReference type="EC" id="2.7.1.16"/>
    </reaction>
</comment>
<comment type="catalytic activity">
    <reaction evidence="2">
        <text>L-ribulose + ATP = L-ribulose 5-phosphate + ADP + H(+)</text>
        <dbReference type="Rhea" id="RHEA:22072"/>
        <dbReference type="ChEBI" id="CHEBI:15378"/>
        <dbReference type="ChEBI" id="CHEBI:16880"/>
        <dbReference type="ChEBI" id="CHEBI:30616"/>
        <dbReference type="ChEBI" id="CHEBI:58226"/>
        <dbReference type="ChEBI" id="CHEBI:456216"/>
        <dbReference type="EC" id="2.7.1.16"/>
    </reaction>
</comment>
<comment type="pathway">
    <text evidence="2">Carbohydrate degradation; L-arabinose degradation via L-ribulose; D-xylulose 5-phosphate from L-arabinose (bacterial route): step 2/3.</text>
</comment>
<comment type="similarity">
    <text evidence="2">Belongs to the ribulokinase family.</text>
</comment>
<evidence type="ECO:0000250" key="1"/>
<evidence type="ECO:0000255" key="2">
    <source>
        <dbReference type="HAMAP-Rule" id="MF_00520"/>
    </source>
</evidence>